<sequence>MAKRGKSVVRTLEDLTLDSGYGGAADSFRSSSLSLCCSEAHISYAHGGHCWNLTDSMRSRHNSLDTVNTVLAEDGETLECSGHCAKLPELEDVPWSLGEVENALNKEEELRFGTVSADLLARLSALVCRALVRIAREAQRLSLRYGKCTKYEVQSAIKMILSWTISVNCIAASLSALSMYNMSTEDKFSRGKSERCGLVFSVGKFFRWMVDSRVAVRVHEHAAIYLTGCMESLFREVFTRVLNSSVVEKDNGIPKFTLESFEQALSNDSELYGLLLPYQHLTCGKNANGILSLPDSLSLHRNQQCSSKAGDAYSQSEQRTIEQSLLATRVGSIAELSDLVSRAMHYLQPLSIKNHSNGTPLPQKSSLVHWEPEALYTLCYFMHCPQMEWENPNVEPSKVTLQNERPFLVLPPLMEWIRVALAHAEHRRSFSVDSDDVRQAARLLLPGVDCEPRQLKTDDCFCVSRKLDAASTEAKFLQDLGFRMLNCGRTDLVNQAINLLGPGGINSMSEQGMTPLMYACVRGDEAMVQMLLDAGADINSEVPNTVQKFPSVFPETRQATPLTFAVLHQHIPVVQLLLDAGANVEGSLQDGMENYTETPLQLASAAGNFELVSLLLERGADPMIGTMYRNGISTAPHGDMNSYSLAAAHGHRNVFCKLLSQSEKGKADVLSLQEILAEGSDLEERNSLKMEATRTGKAKLKALREAMYHSSEHGYVDITLDIRSLGVPWTLHTWLESLRTCFLQHRRPLIQGLLKEFSSIEEEEYTEELITHGLPLMFQILRASKNEVISQQLAVIFTQCYGPYPIPKLTEIKRKQTSRLDPHFLNNKEMSDVTFLVEGKPFYAHKVLLFTASNRFKLLLANRPAAENTCIEISHVKYNVFQLVMQYLYCGGTDALHIRNTEVMDLLSASKFFQLEALQRHCEIICAKNINTETCVEIYNHAKFLEAPELSAYIEGYFLKNMAVLIELEPFKQLLYNTPVENCCPDVLHDLEKTLATRIRSIHLSSSKGSIV</sequence>
<comment type="subcellular location">
    <subcellularLocation>
        <location evidence="3">Membrane</location>
        <topology evidence="3">Single-pass membrane protein</topology>
    </subcellularLocation>
</comment>
<comment type="sequence caution" evidence="3">
    <conflict type="erroneous gene model prediction">
        <sequence resource="EMBL-CDS" id="CAK04227"/>
    </conflict>
</comment>
<reference key="1">
    <citation type="journal article" date="2013" name="Nature">
        <title>The zebrafish reference genome sequence and its relationship to the human genome.</title>
        <authorList>
            <person name="Howe K."/>
            <person name="Clark M.D."/>
            <person name="Torroja C.F."/>
            <person name="Torrance J."/>
            <person name="Berthelot C."/>
            <person name="Muffato M."/>
            <person name="Collins J.E."/>
            <person name="Humphray S."/>
            <person name="McLaren K."/>
            <person name="Matthews L."/>
            <person name="McLaren S."/>
            <person name="Sealy I."/>
            <person name="Caccamo M."/>
            <person name="Churcher C."/>
            <person name="Scott C."/>
            <person name="Barrett J.C."/>
            <person name="Koch R."/>
            <person name="Rauch G.J."/>
            <person name="White S."/>
            <person name="Chow W."/>
            <person name="Kilian B."/>
            <person name="Quintais L.T."/>
            <person name="Guerra-Assuncao J.A."/>
            <person name="Zhou Y."/>
            <person name="Gu Y."/>
            <person name="Yen J."/>
            <person name="Vogel J.H."/>
            <person name="Eyre T."/>
            <person name="Redmond S."/>
            <person name="Banerjee R."/>
            <person name="Chi J."/>
            <person name="Fu B."/>
            <person name="Langley E."/>
            <person name="Maguire S.F."/>
            <person name="Laird G.K."/>
            <person name="Lloyd D."/>
            <person name="Kenyon E."/>
            <person name="Donaldson S."/>
            <person name="Sehra H."/>
            <person name="Almeida-King J."/>
            <person name="Loveland J."/>
            <person name="Trevanion S."/>
            <person name="Jones M."/>
            <person name="Quail M."/>
            <person name="Willey D."/>
            <person name="Hunt A."/>
            <person name="Burton J."/>
            <person name="Sims S."/>
            <person name="McLay K."/>
            <person name="Plumb B."/>
            <person name="Davis J."/>
            <person name="Clee C."/>
            <person name="Oliver K."/>
            <person name="Clark R."/>
            <person name="Riddle C."/>
            <person name="Elliot D."/>
            <person name="Threadgold G."/>
            <person name="Harden G."/>
            <person name="Ware D."/>
            <person name="Begum S."/>
            <person name="Mortimore B."/>
            <person name="Kerry G."/>
            <person name="Heath P."/>
            <person name="Phillimore B."/>
            <person name="Tracey A."/>
            <person name="Corby N."/>
            <person name="Dunn M."/>
            <person name="Johnson C."/>
            <person name="Wood J."/>
            <person name="Clark S."/>
            <person name="Pelan S."/>
            <person name="Griffiths G."/>
            <person name="Smith M."/>
            <person name="Glithero R."/>
            <person name="Howden P."/>
            <person name="Barker N."/>
            <person name="Lloyd C."/>
            <person name="Stevens C."/>
            <person name="Harley J."/>
            <person name="Holt K."/>
            <person name="Panagiotidis G."/>
            <person name="Lovell J."/>
            <person name="Beasley H."/>
            <person name="Henderson C."/>
            <person name="Gordon D."/>
            <person name="Auger K."/>
            <person name="Wright D."/>
            <person name="Collins J."/>
            <person name="Raisen C."/>
            <person name="Dyer L."/>
            <person name="Leung K."/>
            <person name="Robertson L."/>
            <person name="Ambridge K."/>
            <person name="Leongamornlert D."/>
            <person name="McGuire S."/>
            <person name="Gilderthorp R."/>
            <person name="Griffiths C."/>
            <person name="Manthravadi D."/>
            <person name="Nichol S."/>
            <person name="Barker G."/>
            <person name="Whitehead S."/>
            <person name="Kay M."/>
            <person name="Brown J."/>
            <person name="Murnane C."/>
            <person name="Gray E."/>
            <person name="Humphries M."/>
            <person name="Sycamore N."/>
            <person name="Barker D."/>
            <person name="Saunders D."/>
            <person name="Wallis J."/>
            <person name="Babbage A."/>
            <person name="Hammond S."/>
            <person name="Mashreghi-Mohammadi M."/>
            <person name="Barr L."/>
            <person name="Martin S."/>
            <person name="Wray P."/>
            <person name="Ellington A."/>
            <person name="Matthews N."/>
            <person name="Ellwood M."/>
            <person name="Woodmansey R."/>
            <person name="Clark G."/>
            <person name="Cooper J."/>
            <person name="Tromans A."/>
            <person name="Grafham D."/>
            <person name="Skuce C."/>
            <person name="Pandian R."/>
            <person name="Andrews R."/>
            <person name="Harrison E."/>
            <person name="Kimberley A."/>
            <person name="Garnett J."/>
            <person name="Fosker N."/>
            <person name="Hall R."/>
            <person name="Garner P."/>
            <person name="Kelly D."/>
            <person name="Bird C."/>
            <person name="Palmer S."/>
            <person name="Gehring I."/>
            <person name="Berger A."/>
            <person name="Dooley C.M."/>
            <person name="Ersan-Urun Z."/>
            <person name="Eser C."/>
            <person name="Geiger H."/>
            <person name="Geisler M."/>
            <person name="Karotki L."/>
            <person name="Kirn A."/>
            <person name="Konantz J."/>
            <person name="Konantz M."/>
            <person name="Oberlander M."/>
            <person name="Rudolph-Geiger S."/>
            <person name="Teucke M."/>
            <person name="Lanz C."/>
            <person name="Raddatz G."/>
            <person name="Osoegawa K."/>
            <person name="Zhu B."/>
            <person name="Rapp A."/>
            <person name="Widaa S."/>
            <person name="Langford C."/>
            <person name="Yang F."/>
            <person name="Schuster S.C."/>
            <person name="Carter N.P."/>
            <person name="Harrow J."/>
            <person name="Ning Z."/>
            <person name="Herrero J."/>
            <person name="Searle S.M."/>
            <person name="Enright A."/>
            <person name="Geisler R."/>
            <person name="Plasterk R.H."/>
            <person name="Lee C."/>
            <person name="Westerfield M."/>
            <person name="de Jong P.J."/>
            <person name="Zon L.I."/>
            <person name="Postlethwait J.H."/>
            <person name="Nusslein-Volhard C."/>
            <person name="Hubbard T.J."/>
            <person name="Roest Crollius H."/>
            <person name="Rogers J."/>
            <person name="Stemple D.L."/>
        </authorList>
    </citation>
    <scope>NUCLEOTIDE SEQUENCE [LARGE SCALE GENOMIC DNA]</scope>
    <source>
        <strain>Tuebingen</strain>
    </source>
</reference>
<gene>
    <name type="primary">abtb3b</name>
    <name type="synonym">btbd11b</name>
    <name type="ORF">si:ch211-170d11.3</name>
    <name type="ORF">si:dkey-264l19.1</name>
</gene>
<feature type="chain" id="PRO_0000328829" description="Ankyrin repeat- and BTB/POZ domain-containing protein 3-B">
    <location>
        <begin position="1"/>
        <end position="1012"/>
    </location>
</feature>
<feature type="transmembrane region" description="Helical" evidence="1">
    <location>
        <begin position="160"/>
        <end position="180"/>
    </location>
</feature>
<feature type="repeat" description="ANK 1" evidence="1">
    <location>
        <begin position="511"/>
        <end position="540"/>
    </location>
</feature>
<feature type="repeat" description="ANK 2" evidence="1">
    <location>
        <begin position="557"/>
        <end position="586"/>
    </location>
</feature>
<feature type="repeat" description="ANK 3" evidence="1">
    <location>
        <begin position="595"/>
        <end position="624"/>
    </location>
</feature>
<feature type="domain" description="BTB" evidence="2">
    <location>
        <begin position="831"/>
        <end position="897"/>
    </location>
</feature>
<protein>
    <recommendedName>
        <fullName>Ankyrin repeat- and BTB/POZ domain-containing protein 3-B</fullName>
    </recommendedName>
    <alternativeName>
        <fullName>BTB/POZ domain-containing protein 11-B</fullName>
    </alternativeName>
</protein>
<accession>P0C7A6</accession>
<accession>Q1LVL9</accession>
<name>ABT3B_DANRE</name>
<organism>
    <name type="scientific">Danio rerio</name>
    <name type="common">Zebrafish</name>
    <name type="synonym">Brachydanio rerio</name>
    <dbReference type="NCBI Taxonomy" id="7955"/>
    <lineage>
        <taxon>Eukaryota</taxon>
        <taxon>Metazoa</taxon>
        <taxon>Chordata</taxon>
        <taxon>Craniata</taxon>
        <taxon>Vertebrata</taxon>
        <taxon>Euteleostomi</taxon>
        <taxon>Actinopterygii</taxon>
        <taxon>Neopterygii</taxon>
        <taxon>Teleostei</taxon>
        <taxon>Ostariophysi</taxon>
        <taxon>Cypriniformes</taxon>
        <taxon>Danionidae</taxon>
        <taxon>Danioninae</taxon>
        <taxon>Danio</taxon>
    </lineage>
</organism>
<keyword id="KW-0040">ANK repeat</keyword>
<keyword id="KW-0472">Membrane</keyword>
<keyword id="KW-1185">Reference proteome</keyword>
<keyword id="KW-0677">Repeat</keyword>
<keyword id="KW-0812">Transmembrane</keyword>
<keyword id="KW-1133">Transmembrane helix</keyword>
<evidence type="ECO:0000255" key="1"/>
<evidence type="ECO:0000255" key="2">
    <source>
        <dbReference type="PROSITE-ProRule" id="PRU00037"/>
    </source>
</evidence>
<evidence type="ECO:0000305" key="3"/>
<proteinExistence type="predicted"/>
<dbReference type="EMBL" id="BX571976">
    <property type="status" value="NOT_ANNOTATED_CDS"/>
    <property type="molecule type" value="Genomic_DNA"/>
</dbReference>
<dbReference type="EMBL" id="BX649610">
    <property type="protein sequence ID" value="CAK04227.2"/>
    <property type="status" value="ALT_SEQ"/>
    <property type="molecule type" value="Genomic_DNA"/>
</dbReference>
<dbReference type="SMR" id="P0C7A6"/>
<dbReference type="FunCoup" id="P0C7A6">
    <property type="interactions" value="258"/>
</dbReference>
<dbReference type="STRING" id="7955.ENSDARP00000135784"/>
<dbReference type="PaxDb" id="7955-ENSDARP00000086175"/>
<dbReference type="AGR" id="ZFIN:ZDB-GENE-050419-99"/>
<dbReference type="ZFIN" id="ZDB-GENE-050419-99">
    <property type="gene designation" value="btbd11b"/>
</dbReference>
<dbReference type="eggNOG" id="ENOG502QSQY">
    <property type="taxonomic scope" value="Eukaryota"/>
</dbReference>
<dbReference type="InParanoid" id="P0C7A6"/>
<dbReference type="PhylomeDB" id="P0C7A6"/>
<dbReference type="PRO" id="PR:P0C7A6"/>
<dbReference type="Proteomes" id="UP000000437">
    <property type="component" value="Unplaced"/>
</dbReference>
<dbReference type="GO" id="GO:0016020">
    <property type="term" value="C:membrane"/>
    <property type="evidence" value="ECO:0007669"/>
    <property type="project" value="UniProtKB-SubCell"/>
</dbReference>
<dbReference type="GO" id="GO:0046982">
    <property type="term" value="F:protein heterodimerization activity"/>
    <property type="evidence" value="ECO:0007669"/>
    <property type="project" value="InterPro"/>
</dbReference>
<dbReference type="CDD" id="cd22913">
    <property type="entry name" value="HFD_ABTB2-like"/>
    <property type="match status" value="1"/>
</dbReference>
<dbReference type="FunFam" id="1.25.40.20:FF:000045">
    <property type="entry name" value="Ankyrin repeat and BTB/POZ domain-containing protein 2"/>
    <property type="match status" value="1"/>
</dbReference>
<dbReference type="FunFam" id="3.30.710.10:FF:000030">
    <property type="entry name" value="Ankyrin repeat and BTB/POZ domain-containing protein BTBD11"/>
    <property type="match status" value="1"/>
</dbReference>
<dbReference type="Gene3D" id="1.25.40.20">
    <property type="entry name" value="Ankyrin repeat-containing domain"/>
    <property type="match status" value="1"/>
</dbReference>
<dbReference type="Gene3D" id="1.10.20.10">
    <property type="entry name" value="Histone, subunit A"/>
    <property type="match status" value="1"/>
</dbReference>
<dbReference type="Gene3D" id="3.30.710.10">
    <property type="entry name" value="Potassium Channel Kv1.1, Chain A"/>
    <property type="match status" value="1"/>
</dbReference>
<dbReference type="InterPro" id="IPR052089">
    <property type="entry name" value="Ankyrin-BTB/POZ_domain"/>
</dbReference>
<dbReference type="InterPro" id="IPR002110">
    <property type="entry name" value="Ankyrin_rpt"/>
</dbReference>
<dbReference type="InterPro" id="IPR036770">
    <property type="entry name" value="Ankyrin_rpt-contain_sf"/>
</dbReference>
<dbReference type="InterPro" id="IPR000210">
    <property type="entry name" value="BTB/POZ_dom"/>
</dbReference>
<dbReference type="InterPro" id="IPR009072">
    <property type="entry name" value="Histone-fold"/>
</dbReference>
<dbReference type="InterPro" id="IPR011333">
    <property type="entry name" value="SKP1/BTB/POZ_sf"/>
</dbReference>
<dbReference type="PANTHER" id="PTHR46071">
    <property type="entry name" value="ANKYRIN REPEAT AND BTB/POZ DOMAIN-CONTAINING"/>
    <property type="match status" value="1"/>
</dbReference>
<dbReference type="PANTHER" id="PTHR46071:SF1">
    <property type="entry name" value="ANKYRIN REPEAT AND BTB_POZ DOMAIN-CONTAINING PROTEIN 3"/>
    <property type="match status" value="1"/>
</dbReference>
<dbReference type="Pfam" id="PF00023">
    <property type="entry name" value="Ank"/>
    <property type="match status" value="1"/>
</dbReference>
<dbReference type="Pfam" id="PF12796">
    <property type="entry name" value="Ank_2"/>
    <property type="match status" value="1"/>
</dbReference>
<dbReference type="Pfam" id="PF00651">
    <property type="entry name" value="BTB"/>
    <property type="match status" value="1"/>
</dbReference>
<dbReference type="SMART" id="SM00248">
    <property type="entry name" value="ANK"/>
    <property type="match status" value="3"/>
</dbReference>
<dbReference type="SMART" id="SM00225">
    <property type="entry name" value="BTB"/>
    <property type="match status" value="1"/>
</dbReference>
<dbReference type="SUPFAM" id="SSF48403">
    <property type="entry name" value="Ankyrin repeat"/>
    <property type="match status" value="1"/>
</dbReference>
<dbReference type="SUPFAM" id="SSF47113">
    <property type="entry name" value="Histone-fold"/>
    <property type="match status" value="2"/>
</dbReference>
<dbReference type="SUPFAM" id="SSF54695">
    <property type="entry name" value="POZ domain"/>
    <property type="match status" value="1"/>
</dbReference>
<dbReference type="PROSITE" id="PS50297">
    <property type="entry name" value="ANK_REP_REGION"/>
    <property type="match status" value="1"/>
</dbReference>
<dbReference type="PROSITE" id="PS50088">
    <property type="entry name" value="ANK_REPEAT"/>
    <property type="match status" value="3"/>
</dbReference>
<dbReference type="PROSITE" id="PS50097">
    <property type="entry name" value="BTB"/>
    <property type="match status" value="1"/>
</dbReference>